<evidence type="ECO:0000255" key="1">
    <source>
        <dbReference type="HAMAP-Rule" id="MF_00372"/>
    </source>
</evidence>
<evidence type="ECO:0000305" key="2"/>
<feature type="chain" id="PRO_0000306522" description="Imidazolonepropionase">
    <location>
        <begin position="1"/>
        <end position="421"/>
    </location>
</feature>
<feature type="binding site" evidence="1">
    <location>
        <position position="81"/>
    </location>
    <ligand>
        <name>Fe(3+)</name>
        <dbReference type="ChEBI" id="CHEBI:29034"/>
    </ligand>
</feature>
<feature type="binding site" evidence="1">
    <location>
        <position position="81"/>
    </location>
    <ligand>
        <name>Zn(2+)</name>
        <dbReference type="ChEBI" id="CHEBI:29105"/>
    </ligand>
</feature>
<feature type="binding site" evidence="1">
    <location>
        <position position="83"/>
    </location>
    <ligand>
        <name>Fe(3+)</name>
        <dbReference type="ChEBI" id="CHEBI:29034"/>
    </ligand>
</feature>
<feature type="binding site" evidence="1">
    <location>
        <position position="83"/>
    </location>
    <ligand>
        <name>Zn(2+)</name>
        <dbReference type="ChEBI" id="CHEBI:29105"/>
    </ligand>
</feature>
<feature type="binding site" evidence="1">
    <location>
        <position position="90"/>
    </location>
    <ligand>
        <name>4-imidazolone-5-propanoate</name>
        <dbReference type="ChEBI" id="CHEBI:77893"/>
    </ligand>
</feature>
<feature type="binding site" evidence="1">
    <location>
        <position position="153"/>
    </location>
    <ligand>
        <name>4-imidazolone-5-propanoate</name>
        <dbReference type="ChEBI" id="CHEBI:77893"/>
    </ligand>
</feature>
<feature type="binding site" evidence="1">
    <location>
        <position position="153"/>
    </location>
    <ligand>
        <name>N-formimidoyl-L-glutamate</name>
        <dbReference type="ChEBI" id="CHEBI:58928"/>
    </ligand>
</feature>
<feature type="binding site" evidence="1">
    <location>
        <position position="186"/>
    </location>
    <ligand>
        <name>4-imidazolone-5-propanoate</name>
        <dbReference type="ChEBI" id="CHEBI:77893"/>
    </ligand>
</feature>
<feature type="binding site" evidence="1">
    <location>
        <position position="251"/>
    </location>
    <ligand>
        <name>Fe(3+)</name>
        <dbReference type="ChEBI" id="CHEBI:29034"/>
    </ligand>
</feature>
<feature type="binding site" evidence="1">
    <location>
        <position position="251"/>
    </location>
    <ligand>
        <name>Zn(2+)</name>
        <dbReference type="ChEBI" id="CHEBI:29105"/>
    </ligand>
</feature>
<feature type="binding site" evidence="1">
    <location>
        <position position="254"/>
    </location>
    <ligand>
        <name>4-imidazolone-5-propanoate</name>
        <dbReference type="ChEBI" id="CHEBI:77893"/>
    </ligand>
</feature>
<feature type="binding site" evidence="1">
    <location>
        <position position="326"/>
    </location>
    <ligand>
        <name>Fe(3+)</name>
        <dbReference type="ChEBI" id="CHEBI:29034"/>
    </ligand>
</feature>
<feature type="binding site" evidence="1">
    <location>
        <position position="326"/>
    </location>
    <ligand>
        <name>Zn(2+)</name>
        <dbReference type="ChEBI" id="CHEBI:29105"/>
    </ligand>
</feature>
<feature type="binding site" evidence="1">
    <location>
        <position position="328"/>
    </location>
    <ligand>
        <name>N-formimidoyl-L-glutamate</name>
        <dbReference type="ChEBI" id="CHEBI:58928"/>
    </ligand>
</feature>
<feature type="binding site" evidence="1">
    <location>
        <position position="330"/>
    </location>
    <ligand>
        <name>N-formimidoyl-L-glutamate</name>
        <dbReference type="ChEBI" id="CHEBI:58928"/>
    </ligand>
</feature>
<feature type="binding site" evidence="1">
    <location>
        <position position="331"/>
    </location>
    <ligand>
        <name>4-imidazolone-5-propanoate</name>
        <dbReference type="ChEBI" id="CHEBI:77893"/>
    </ligand>
</feature>
<keyword id="KW-0963">Cytoplasm</keyword>
<keyword id="KW-0369">Histidine metabolism</keyword>
<keyword id="KW-0378">Hydrolase</keyword>
<keyword id="KW-0408">Iron</keyword>
<keyword id="KW-0479">Metal-binding</keyword>
<keyword id="KW-0862">Zinc</keyword>
<name>HUTI_STRPB</name>
<proteinExistence type="inferred from homology"/>
<organism>
    <name type="scientific">Streptococcus pyogenes serotype M12 (strain MGAS2096)</name>
    <dbReference type="NCBI Taxonomy" id="370553"/>
    <lineage>
        <taxon>Bacteria</taxon>
        <taxon>Bacillati</taxon>
        <taxon>Bacillota</taxon>
        <taxon>Bacilli</taxon>
        <taxon>Lactobacillales</taxon>
        <taxon>Streptococcaceae</taxon>
        <taxon>Streptococcus</taxon>
    </lineage>
</organism>
<protein>
    <recommendedName>
        <fullName evidence="1">Imidazolonepropionase</fullName>
        <ecNumber evidence="1">3.5.2.7</ecNumber>
    </recommendedName>
    <alternativeName>
        <fullName evidence="1">Imidazolone-5-propionate hydrolase</fullName>
    </alternativeName>
</protein>
<accession>Q1J9F6</accession>
<comment type="function">
    <text evidence="1">Catalyzes the hydrolytic cleavage of the carbon-nitrogen bond in imidazolone-5-propanoate to yield N-formimidoyl-L-glutamate. It is the third step in the universal histidine degradation pathway.</text>
</comment>
<comment type="catalytic activity">
    <reaction evidence="1">
        <text>4-imidazolone-5-propanoate + H2O = N-formimidoyl-L-glutamate</text>
        <dbReference type="Rhea" id="RHEA:23660"/>
        <dbReference type="ChEBI" id="CHEBI:15377"/>
        <dbReference type="ChEBI" id="CHEBI:58928"/>
        <dbReference type="ChEBI" id="CHEBI:77893"/>
        <dbReference type="EC" id="3.5.2.7"/>
    </reaction>
</comment>
<comment type="cofactor">
    <cofactor evidence="1">
        <name>Zn(2+)</name>
        <dbReference type="ChEBI" id="CHEBI:29105"/>
    </cofactor>
    <cofactor evidence="1">
        <name>Fe(3+)</name>
        <dbReference type="ChEBI" id="CHEBI:29034"/>
    </cofactor>
    <text evidence="1">Binds 1 zinc or iron ion per subunit.</text>
</comment>
<comment type="pathway">
    <text evidence="1">Amino-acid degradation; L-histidine degradation into L-glutamate; N-formimidoyl-L-glutamate from L-histidine: step 3/3.</text>
</comment>
<comment type="subcellular location">
    <subcellularLocation>
        <location evidence="1">Cytoplasm</location>
    </subcellularLocation>
</comment>
<comment type="similarity">
    <text evidence="1">Belongs to the metallo-dependent hydrolases superfamily. HutI family.</text>
</comment>
<comment type="sequence caution" evidence="2">
    <conflict type="erroneous initiation">
        <sequence resource="EMBL-CDS" id="ABF36855"/>
    </conflict>
</comment>
<dbReference type="EC" id="3.5.2.7" evidence="1"/>
<dbReference type="EMBL" id="CP000261">
    <property type="protein sequence ID" value="ABF36855.1"/>
    <property type="status" value="ALT_INIT"/>
    <property type="molecule type" value="Genomic_DNA"/>
</dbReference>
<dbReference type="SMR" id="Q1J9F6"/>
<dbReference type="KEGG" id="spj:MGAS2096_Spy1803"/>
<dbReference type="HOGENOM" id="CLU_041647_0_1_9"/>
<dbReference type="UniPathway" id="UPA00379">
    <property type="reaction ID" value="UER00551"/>
</dbReference>
<dbReference type="GO" id="GO:0005737">
    <property type="term" value="C:cytoplasm"/>
    <property type="evidence" value="ECO:0007669"/>
    <property type="project" value="UniProtKB-SubCell"/>
</dbReference>
<dbReference type="GO" id="GO:0050480">
    <property type="term" value="F:imidazolonepropionase activity"/>
    <property type="evidence" value="ECO:0007669"/>
    <property type="project" value="UniProtKB-UniRule"/>
</dbReference>
<dbReference type="GO" id="GO:0005506">
    <property type="term" value="F:iron ion binding"/>
    <property type="evidence" value="ECO:0007669"/>
    <property type="project" value="UniProtKB-UniRule"/>
</dbReference>
<dbReference type="GO" id="GO:0008270">
    <property type="term" value="F:zinc ion binding"/>
    <property type="evidence" value="ECO:0007669"/>
    <property type="project" value="UniProtKB-UniRule"/>
</dbReference>
<dbReference type="GO" id="GO:0019556">
    <property type="term" value="P:L-histidine catabolic process to glutamate and formamide"/>
    <property type="evidence" value="ECO:0007669"/>
    <property type="project" value="UniProtKB-UniPathway"/>
</dbReference>
<dbReference type="GO" id="GO:0019557">
    <property type="term" value="P:L-histidine catabolic process to glutamate and formate"/>
    <property type="evidence" value="ECO:0007669"/>
    <property type="project" value="UniProtKB-UniPathway"/>
</dbReference>
<dbReference type="CDD" id="cd01296">
    <property type="entry name" value="Imidazolone-5PH"/>
    <property type="match status" value="1"/>
</dbReference>
<dbReference type="FunFam" id="3.20.20.140:FF:000007">
    <property type="entry name" value="Imidazolonepropionase"/>
    <property type="match status" value="1"/>
</dbReference>
<dbReference type="Gene3D" id="3.20.20.140">
    <property type="entry name" value="Metal-dependent hydrolases"/>
    <property type="match status" value="1"/>
</dbReference>
<dbReference type="Gene3D" id="2.30.40.10">
    <property type="entry name" value="Urease, subunit C, domain 1"/>
    <property type="match status" value="1"/>
</dbReference>
<dbReference type="HAMAP" id="MF_00372">
    <property type="entry name" value="HutI"/>
    <property type="match status" value="1"/>
</dbReference>
<dbReference type="InterPro" id="IPR006680">
    <property type="entry name" value="Amidohydro-rel"/>
</dbReference>
<dbReference type="InterPro" id="IPR005920">
    <property type="entry name" value="HutI"/>
</dbReference>
<dbReference type="InterPro" id="IPR011059">
    <property type="entry name" value="Metal-dep_hydrolase_composite"/>
</dbReference>
<dbReference type="InterPro" id="IPR032466">
    <property type="entry name" value="Metal_Hydrolase"/>
</dbReference>
<dbReference type="NCBIfam" id="TIGR01224">
    <property type="entry name" value="hutI"/>
    <property type="match status" value="1"/>
</dbReference>
<dbReference type="PANTHER" id="PTHR42752">
    <property type="entry name" value="IMIDAZOLONEPROPIONASE"/>
    <property type="match status" value="1"/>
</dbReference>
<dbReference type="PANTHER" id="PTHR42752:SF1">
    <property type="entry name" value="IMIDAZOLONEPROPIONASE-RELATED"/>
    <property type="match status" value="1"/>
</dbReference>
<dbReference type="Pfam" id="PF01979">
    <property type="entry name" value="Amidohydro_1"/>
    <property type="match status" value="1"/>
</dbReference>
<dbReference type="SUPFAM" id="SSF51338">
    <property type="entry name" value="Composite domain of metallo-dependent hydrolases"/>
    <property type="match status" value="1"/>
</dbReference>
<dbReference type="SUPFAM" id="SSF51556">
    <property type="entry name" value="Metallo-dependent hydrolases"/>
    <property type="match status" value="1"/>
</dbReference>
<sequence>MVADVLLTHFNQLFCLNDPGHPLTGQEMKKATIVEDGYIAIKDGLIVALGSGEPDAELVGPQTIMRSYKGKIATPGIIDCHTHLVYGGSREHEFAKKLAGVSYLDILAQGGGILSTVRATRSASFDNLYQKSKRLLDYMLLHGVTTVEAKSGYGLDWETEKRQLDVVAALEKDHPIDLVSTFMAAHAIPEEYKGNPKAYLDVIIKDMLPVVKEENLAEFCDIFCEKNVFTADESRYLLSKAKEMGFKLRIHADEIASIGGVDVAAELSAVSAEHLMMITNDDIAKLIGAGVIGNLLPATTFSLMEDTYAPARKMIDAGMAITLSTDSNPGSCPTANMQFVMQLGCFMLRLTPIEVLNAVTINAAYSVNRQERVGSLTVGKEADIAIFDAPNIDYPFYFFATNLIHQVYKKGQLTVDRGRIL</sequence>
<reference key="1">
    <citation type="journal article" date="2006" name="Proc. Natl. Acad. Sci. U.S.A.">
        <title>Molecular genetic anatomy of inter- and intraserotype variation in the human bacterial pathogen group A Streptococcus.</title>
        <authorList>
            <person name="Beres S.B."/>
            <person name="Richter E.W."/>
            <person name="Nagiec M.J."/>
            <person name="Sumby P."/>
            <person name="Porcella S.F."/>
            <person name="DeLeo F.R."/>
            <person name="Musser J.M."/>
        </authorList>
    </citation>
    <scope>NUCLEOTIDE SEQUENCE [LARGE SCALE GENOMIC DNA]</scope>
    <source>
        <strain>MGAS2096</strain>
    </source>
</reference>
<gene>
    <name evidence="1" type="primary">hutI</name>
    <name type="ordered locus">MGAS2096_Spy1803</name>
</gene>